<gene>
    <name type="primary">frwB</name>
    <name type="ordered locus">SF4027</name>
    <name type="ordered locus">S3719</name>
</gene>
<comment type="function">
    <text evidence="1">The phosphoenolpyruvate-dependent sugar phosphotransferase system (sugar PTS), a major carbohydrate active transport system, catalyzes the phosphorylation of incoming sugar substrates concomitantly with their translocation across the cell membrane. The enzyme II FrwABC PTS system is involved in fructose transport.</text>
</comment>
<comment type="catalytic activity">
    <reaction evidence="1">
        <text>D-fructose(out) + N(pros)-phospho-L-histidyl-[protein] = D-fructose 1-phosphate(in) + L-histidyl-[protein]</text>
        <dbReference type="Rhea" id="RHEA:49252"/>
        <dbReference type="Rhea" id="RHEA-COMP:9745"/>
        <dbReference type="Rhea" id="RHEA-COMP:9746"/>
        <dbReference type="ChEBI" id="CHEBI:29979"/>
        <dbReference type="ChEBI" id="CHEBI:37721"/>
        <dbReference type="ChEBI" id="CHEBI:58674"/>
        <dbReference type="ChEBI" id="CHEBI:64837"/>
        <dbReference type="EC" id="2.7.1.202"/>
    </reaction>
</comment>
<comment type="subcellular location">
    <subcellularLocation>
        <location evidence="3">Cytoplasm</location>
    </subcellularLocation>
</comment>
<comment type="domain">
    <text evidence="2">The PTS EIIB type-2 domain is phosphorylated by phospho-EIIA on a cysteinyl residue. Then, it transfers the phosphoryl group to the sugar substrate concomitantly with the sugar uptake processed by the PTS EIIC type-2 domain.</text>
</comment>
<evidence type="ECO:0000250" key="1">
    <source>
        <dbReference type="UniProtKB" id="P20966"/>
    </source>
</evidence>
<evidence type="ECO:0000255" key="2">
    <source>
        <dbReference type="PROSITE-ProRule" id="PRU00422"/>
    </source>
</evidence>
<evidence type="ECO:0000305" key="3"/>
<accession>P69819</accession>
<accession>P32673</accession>
<keyword id="KW-0963">Cytoplasm</keyword>
<keyword id="KW-0418">Kinase</keyword>
<keyword id="KW-0597">Phosphoprotein</keyword>
<keyword id="KW-0598">Phosphotransferase system</keyword>
<keyword id="KW-1185">Reference proteome</keyword>
<keyword id="KW-0762">Sugar transport</keyword>
<keyword id="KW-0808">Transferase</keyword>
<keyword id="KW-0813">Transport</keyword>
<dbReference type="EC" id="2.7.1.202" evidence="1"/>
<dbReference type="EMBL" id="AE005674">
    <property type="protein sequence ID" value="AAN45457.1"/>
    <property type="molecule type" value="Genomic_DNA"/>
</dbReference>
<dbReference type="EMBL" id="AE014073">
    <property type="protein sequence ID" value="AAP18745.1"/>
    <property type="molecule type" value="Genomic_DNA"/>
</dbReference>
<dbReference type="RefSeq" id="NP_709750.1">
    <property type="nucleotide sequence ID" value="NC_004337.2"/>
</dbReference>
<dbReference type="RefSeq" id="WP_000161265.1">
    <property type="nucleotide sequence ID" value="NZ_WPGW01000012.1"/>
</dbReference>
<dbReference type="SMR" id="P69819"/>
<dbReference type="STRING" id="198214.SF4027"/>
<dbReference type="PaxDb" id="198214-SF4027"/>
<dbReference type="GeneID" id="1026574"/>
<dbReference type="KEGG" id="sfl:SF4027"/>
<dbReference type="KEGG" id="sfx:S3719"/>
<dbReference type="PATRIC" id="fig|198214.7.peg.4749"/>
<dbReference type="HOGENOM" id="CLU_013155_2_1_6"/>
<dbReference type="Proteomes" id="UP000001006">
    <property type="component" value="Chromosome"/>
</dbReference>
<dbReference type="Proteomes" id="UP000002673">
    <property type="component" value="Chromosome"/>
</dbReference>
<dbReference type="GO" id="GO:0005737">
    <property type="term" value="C:cytoplasm"/>
    <property type="evidence" value="ECO:0007669"/>
    <property type="project" value="UniProtKB-SubCell"/>
</dbReference>
<dbReference type="GO" id="GO:0005886">
    <property type="term" value="C:plasma membrane"/>
    <property type="evidence" value="ECO:0007669"/>
    <property type="project" value="TreeGrafter"/>
</dbReference>
<dbReference type="GO" id="GO:0016301">
    <property type="term" value="F:kinase activity"/>
    <property type="evidence" value="ECO:0007669"/>
    <property type="project" value="UniProtKB-KW"/>
</dbReference>
<dbReference type="GO" id="GO:0022877">
    <property type="term" value="F:protein-N(PI)-phosphohistidine-fructose phosphotransferase system transporter activity"/>
    <property type="evidence" value="ECO:0007669"/>
    <property type="project" value="InterPro"/>
</dbReference>
<dbReference type="GO" id="GO:0090582">
    <property type="term" value="F:protein-phosphocysteine-D-fructose-phosphotransferase system transporter activity"/>
    <property type="evidence" value="ECO:0000250"/>
    <property type="project" value="UniProtKB"/>
</dbReference>
<dbReference type="GO" id="GO:0009401">
    <property type="term" value="P:phosphoenolpyruvate-dependent sugar phosphotransferase system"/>
    <property type="evidence" value="ECO:0000250"/>
    <property type="project" value="UniProtKB"/>
</dbReference>
<dbReference type="CDD" id="cd05569">
    <property type="entry name" value="PTS_IIB_fructose"/>
    <property type="match status" value="1"/>
</dbReference>
<dbReference type="FunFam" id="3.40.50.2300:FF:000014">
    <property type="entry name" value="PTS system fructose-like transporter subunit IIB"/>
    <property type="match status" value="1"/>
</dbReference>
<dbReference type="Gene3D" id="3.40.50.2300">
    <property type="match status" value="1"/>
</dbReference>
<dbReference type="InterPro" id="IPR050864">
    <property type="entry name" value="Bacterial_PTS_Sugar_Transport"/>
</dbReference>
<dbReference type="InterPro" id="IPR036095">
    <property type="entry name" value="PTS_EIIB-like_sf"/>
</dbReference>
<dbReference type="InterPro" id="IPR013011">
    <property type="entry name" value="PTS_EIIB_2"/>
</dbReference>
<dbReference type="InterPro" id="IPR003501">
    <property type="entry name" value="PTS_EIIB_2/3"/>
</dbReference>
<dbReference type="InterPro" id="IPR003353">
    <property type="entry name" value="PTS_IIB_fruc"/>
</dbReference>
<dbReference type="NCBIfam" id="TIGR00829">
    <property type="entry name" value="FRU"/>
    <property type="match status" value="1"/>
</dbReference>
<dbReference type="NCBIfam" id="NF007783">
    <property type="entry name" value="PRK10474.1"/>
    <property type="match status" value="1"/>
</dbReference>
<dbReference type="PANTHER" id="PTHR30505">
    <property type="entry name" value="FRUCTOSE-LIKE PERMEASE"/>
    <property type="match status" value="1"/>
</dbReference>
<dbReference type="PANTHER" id="PTHR30505:SF0">
    <property type="entry name" value="FRUCTOSE-LIKE PTS SYSTEM EIIBC COMPONENT-RELATED"/>
    <property type="match status" value="1"/>
</dbReference>
<dbReference type="Pfam" id="PF02302">
    <property type="entry name" value="PTS_IIB"/>
    <property type="match status" value="1"/>
</dbReference>
<dbReference type="SUPFAM" id="SSF52794">
    <property type="entry name" value="PTS system IIB component-like"/>
    <property type="match status" value="1"/>
</dbReference>
<dbReference type="PROSITE" id="PS51099">
    <property type="entry name" value="PTS_EIIB_TYPE_2"/>
    <property type="match status" value="1"/>
</dbReference>
<reference key="1">
    <citation type="journal article" date="2002" name="Nucleic Acids Res.">
        <title>Genome sequence of Shigella flexneri 2a: insights into pathogenicity through comparison with genomes of Escherichia coli K12 and O157.</title>
        <authorList>
            <person name="Jin Q."/>
            <person name="Yuan Z."/>
            <person name="Xu J."/>
            <person name="Wang Y."/>
            <person name="Shen Y."/>
            <person name="Lu W."/>
            <person name="Wang J."/>
            <person name="Liu H."/>
            <person name="Yang J."/>
            <person name="Yang F."/>
            <person name="Zhang X."/>
            <person name="Zhang J."/>
            <person name="Yang G."/>
            <person name="Wu H."/>
            <person name="Qu D."/>
            <person name="Dong J."/>
            <person name="Sun L."/>
            <person name="Xue Y."/>
            <person name="Zhao A."/>
            <person name="Gao Y."/>
            <person name="Zhu J."/>
            <person name="Kan B."/>
            <person name="Ding K."/>
            <person name="Chen S."/>
            <person name="Cheng H."/>
            <person name="Yao Z."/>
            <person name="He B."/>
            <person name="Chen R."/>
            <person name="Ma D."/>
            <person name="Qiang B."/>
            <person name="Wen Y."/>
            <person name="Hou Y."/>
            <person name="Yu J."/>
        </authorList>
    </citation>
    <scope>NUCLEOTIDE SEQUENCE [LARGE SCALE GENOMIC DNA]</scope>
    <source>
        <strain>301 / Serotype 2a</strain>
    </source>
</reference>
<reference key="2">
    <citation type="journal article" date="2003" name="Infect. Immun.">
        <title>Complete genome sequence and comparative genomics of Shigella flexneri serotype 2a strain 2457T.</title>
        <authorList>
            <person name="Wei J."/>
            <person name="Goldberg M.B."/>
            <person name="Burland V."/>
            <person name="Venkatesan M.M."/>
            <person name="Deng W."/>
            <person name="Fournier G."/>
            <person name="Mayhew G.F."/>
            <person name="Plunkett G. III"/>
            <person name="Rose D.J."/>
            <person name="Darling A."/>
            <person name="Mau B."/>
            <person name="Perna N.T."/>
            <person name="Payne S.M."/>
            <person name="Runyen-Janecky L.J."/>
            <person name="Zhou S."/>
            <person name="Schwartz D.C."/>
            <person name="Blattner F.R."/>
        </authorList>
    </citation>
    <scope>NUCLEOTIDE SEQUENCE [LARGE SCALE GENOMIC DNA]</scope>
    <source>
        <strain>ATCC 700930 / 2457T / Serotype 2a</strain>
    </source>
</reference>
<name>PTFB2_SHIFL</name>
<organism>
    <name type="scientific">Shigella flexneri</name>
    <dbReference type="NCBI Taxonomy" id="623"/>
    <lineage>
        <taxon>Bacteria</taxon>
        <taxon>Pseudomonadati</taxon>
        <taxon>Pseudomonadota</taxon>
        <taxon>Gammaproteobacteria</taxon>
        <taxon>Enterobacterales</taxon>
        <taxon>Enterobacteriaceae</taxon>
        <taxon>Shigella</taxon>
    </lineage>
</organism>
<proteinExistence type="inferred from homology"/>
<feature type="chain" id="PRO_0000186504" description="PTS system fructose-like EIIB component 2">
    <location>
        <begin position="1"/>
        <end position="106"/>
    </location>
</feature>
<feature type="domain" description="PTS EIIB type-2" evidence="2">
    <location>
        <begin position="1"/>
        <end position="103"/>
    </location>
</feature>
<feature type="active site" description="Phosphocysteine intermediate" evidence="1 3">
    <location>
        <position position="10"/>
    </location>
</feature>
<feature type="modified residue" description="Phosphocysteine; by EIIA" evidence="2">
    <location>
        <position position="10"/>
    </location>
</feature>
<sequence>MTKIIAVTACPSGVAHTYMAAEALESAAKAKGWEVKVETQGSIGLENELTAEDVASADMVILTKDIGIKFEERFAGKTIVRVNISDAVKRADAIMSKIEAHLAQTA</sequence>
<protein>
    <recommendedName>
        <fullName evidence="1">PTS system fructose-like EIIB component 2</fullName>
        <ecNumber evidence="1">2.7.1.202</ecNumber>
    </recommendedName>
    <alternativeName>
        <fullName evidence="1">Fructose-like phosphotransferase enzyme IIB component 2</fullName>
    </alternativeName>
</protein>